<accession>C1EWH5</accession>
<reference key="1">
    <citation type="submission" date="2009-02" db="EMBL/GenBank/DDBJ databases">
        <title>Genome sequence of Bacillus cereus 03BB102.</title>
        <authorList>
            <person name="Dodson R.J."/>
            <person name="Jackson P."/>
            <person name="Munk A.C."/>
            <person name="Brettin T."/>
            <person name="Bruce D."/>
            <person name="Detter C."/>
            <person name="Tapia R."/>
            <person name="Han C."/>
            <person name="Sutton G."/>
            <person name="Sims D."/>
        </authorList>
    </citation>
    <scope>NUCLEOTIDE SEQUENCE [LARGE SCALE GENOMIC DNA]</scope>
    <source>
        <strain>03BB102</strain>
    </source>
</reference>
<feature type="chain" id="PRO_1000200076" description="Probable transcriptional regulatory protein BCA_0578">
    <location>
        <begin position="1"/>
        <end position="239"/>
    </location>
</feature>
<proteinExistence type="inferred from homology"/>
<gene>
    <name type="ordered locus">BCA_0578</name>
</gene>
<dbReference type="EMBL" id="CP001407">
    <property type="protein sequence ID" value="ACO27148.1"/>
    <property type="molecule type" value="Genomic_DNA"/>
</dbReference>
<dbReference type="RefSeq" id="WP_000532948.1">
    <property type="nucleotide sequence ID" value="NZ_CP009318.1"/>
</dbReference>
<dbReference type="SMR" id="C1EWH5"/>
<dbReference type="KEGG" id="bcx:BCA_0578"/>
<dbReference type="PATRIC" id="fig|572264.18.peg.546"/>
<dbReference type="Proteomes" id="UP000002210">
    <property type="component" value="Chromosome"/>
</dbReference>
<dbReference type="GO" id="GO:0005829">
    <property type="term" value="C:cytosol"/>
    <property type="evidence" value="ECO:0007669"/>
    <property type="project" value="TreeGrafter"/>
</dbReference>
<dbReference type="GO" id="GO:0003677">
    <property type="term" value="F:DNA binding"/>
    <property type="evidence" value="ECO:0007669"/>
    <property type="project" value="UniProtKB-UniRule"/>
</dbReference>
<dbReference type="GO" id="GO:0006355">
    <property type="term" value="P:regulation of DNA-templated transcription"/>
    <property type="evidence" value="ECO:0007669"/>
    <property type="project" value="UniProtKB-UniRule"/>
</dbReference>
<dbReference type="FunFam" id="1.10.10.200:FF:000003">
    <property type="entry name" value="Probable transcriptional regulatory protein YeeN"/>
    <property type="match status" value="1"/>
</dbReference>
<dbReference type="FunFam" id="3.30.70.980:FF:000004">
    <property type="entry name" value="Probable transcriptional regulatory protein YeeN"/>
    <property type="match status" value="1"/>
</dbReference>
<dbReference type="Gene3D" id="1.10.10.200">
    <property type="match status" value="1"/>
</dbReference>
<dbReference type="Gene3D" id="3.30.70.980">
    <property type="match status" value="2"/>
</dbReference>
<dbReference type="HAMAP" id="MF_00693">
    <property type="entry name" value="Transcrip_reg_TACO1"/>
    <property type="match status" value="1"/>
</dbReference>
<dbReference type="HAMAP" id="MF_00918">
    <property type="entry name" value="Transcrip_reg_TACO1_YeeN"/>
    <property type="match status" value="1"/>
</dbReference>
<dbReference type="InterPro" id="IPR017856">
    <property type="entry name" value="Integrase-like_N"/>
</dbReference>
<dbReference type="InterPro" id="IPR048300">
    <property type="entry name" value="TACO1_YebC-like_2nd/3rd_dom"/>
</dbReference>
<dbReference type="InterPro" id="IPR049083">
    <property type="entry name" value="TACO1_YebC_N"/>
</dbReference>
<dbReference type="InterPro" id="IPR002876">
    <property type="entry name" value="Transcrip_reg_TACO1-like"/>
</dbReference>
<dbReference type="InterPro" id="IPR026564">
    <property type="entry name" value="Transcrip_reg_TACO1-like_dom3"/>
</dbReference>
<dbReference type="InterPro" id="IPR026562">
    <property type="entry name" value="Transcrip_reg_TACO1_YeeN"/>
</dbReference>
<dbReference type="InterPro" id="IPR029072">
    <property type="entry name" value="YebC-like"/>
</dbReference>
<dbReference type="NCBIfam" id="NF001030">
    <property type="entry name" value="PRK00110.1"/>
    <property type="match status" value="1"/>
</dbReference>
<dbReference type="NCBIfam" id="NF009044">
    <property type="entry name" value="PRK12378.1"/>
    <property type="match status" value="1"/>
</dbReference>
<dbReference type="NCBIfam" id="TIGR01033">
    <property type="entry name" value="YebC/PmpR family DNA-binding transcriptional regulator"/>
    <property type="match status" value="1"/>
</dbReference>
<dbReference type="PANTHER" id="PTHR12532">
    <property type="entry name" value="TRANSLATIONAL ACTIVATOR OF CYTOCHROME C OXIDASE 1"/>
    <property type="match status" value="1"/>
</dbReference>
<dbReference type="PANTHER" id="PTHR12532:SF0">
    <property type="entry name" value="TRANSLATIONAL ACTIVATOR OF CYTOCHROME C OXIDASE 1"/>
    <property type="match status" value="1"/>
</dbReference>
<dbReference type="Pfam" id="PF20772">
    <property type="entry name" value="TACO1_YebC_N"/>
    <property type="match status" value="1"/>
</dbReference>
<dbReference type="Pfam" id="PF01709">
    <property type="entry name" value="Transcrip_reg"/>
    <property type="match status" value="1"/>
</dbReference>
<dbReference type="SUPFAM" id="SSF75625">
    <property type="entry name" value="YebC-like"/>
    <property type="match status" value="1"/>
</dbReference>
<comment type="subcellular location">
    <subcellularLocation>
        <location evidence="1">Cytoplasm</location>
    </subcellularLocation>
</comment>
<comment type="similarity">
    <text evidence="1">Belongs to the TACO1 family. YeeN subfamily.</text>
</comment>
<keyword id="KW-0963">Cytoplasm</keyword>
<keyword id="KW-0238">DNA-binding</keyword>
<keyword id="KW-0804">Transcription</keyword>
<keyword id="KW-0805">Transcription regulation</keyword>
<sequence length="239" mass="26358">MGRKWNNIKDKKASKDANTSRIYAKFGREIYVAAKQGEPDPESNQALRVVLERAKTYNVPRTIIDRAVEKAKGGSEENYDELRYEGFGPNGAMVIVDTLTNNVNRTAADVRAAFSKNSGNMGVNGSVAYMFDATAVIGLEGKTSDEVLEILMEADVDARDILEEEDAVIVYAEPDQFHAVQSALKDAGVEEFTVAELTMLAQNDVTLPEDAQAQFEKMVDALEDLEDVQQVYHNVDLGE</sequence>
<protein>
    <recommendedName>
        <fullName evidence="1">Probable transcriptional regulatory protein BCA_0578</fullName>
    </recommendedName>
</protein>
<evidence type="ECO:0000255" key="1">
    <source>
        <dbReference type="HAMAP-Rule" id="MF_00918"/>
    </source>
</evidence>
<name>Y578_BACC3</name>
<organism>
    <name type="scientific">Bacillus cereus (strain 03BB102)</name>
    <dbReference type="NCBI Taxonomy" id="572264"/>
    <lineage>
        <taxon>Bacteria</taxon>
        <taxon>Bacillati</taxon>
        <taxon>Bacillota</taxon>
        <taxon>Bacilli</taxon>
        <taxon>Bacillales</taxon>
        <taxon>Bacillaceae</taxon>
        <taxon>Bacillus</taxon>
        <taxon>Bacillus cereus group</taxon>
    </lineage>
</organism>